<feature type="chain" id="PRO_0000072012" description="SRC kinase signaling inhibitor 1">
    <location>
        <begin position="1"/>
        <end position="1250"/>
    </location>
</feature>
<feature type="region of interest" description="Disordered" evidence="5">
    <location>
        <begin position="19"/>
        <end position="78"/>
    </location>
</feature>
<feature type="region of interest" description="Disordered" evidence="5">
    <location>
        <begin position="352"/>
        <end position="448"/>
    </location>
</feature>
<feature type="region of interest" description="Disordered" evidence="5">
    <location>
        <begin position="538"/>
        <end position="710"/>
    </location>
</feature>
<feature type="region of interest" description="Interaction with SNAP25" evidence="3">
    <location>
        <begin position="714"/>
        <end position="764"/>
    </location>
</feature>
<feature type="region of interest" description="Disordered" evidence="5">
    <location>
        <begin position="924"/>
        <end position="982"/>
    </location>
</feature>
<feature type="region of interest" description="Disordered" evidence="5">
    <location>
        <begin position="1016"/>
        <end position="1094"/>
    </location>
</feature>
<feature type="region of interest" description="Disordered" evidence="5">
    <location>
        <begin position="1155"/>
        <end position="1250"/>
    </location>
</feature>
<feature type="coiled-coil region" evidence="4">
    <location>
        <begin position="712"/>
        <end position="753"/>
    </location>
</feature>
<feature type="coiled-coil region" evidence="4">
    <location>
        <begin position="793"/>
        <end position="813"/>
    </location>
</feature>
<feature type="compositionally biased region" description="Basic and acidic residues" evidence="5">
    <location>
        <begin position="19"/>
        <end position="45"/>
    </location>
</feature>
<feature type="compositionally biased region" description="Gly residues" evidence="5">
    <location>
        <begin position="65"/>
        <end position="75"/>
    </location>
</feature>
<feature type="compositionally biased region" description="Polar residues" evidence="5">
    <location>
        <begin position="354"/>
        <end position="364"/>
    </location>
</feature>
<feature type="compositionally biased region" description="Low complexity" evidence="5">
    <location>
        <begin position="365"/>
        <end position="374"/>
    </location>
</feature>
<feature type="compositionally biased region" description="Low complexity" evidence="5">
    <location>
        <begin position="381"/>
        <end position="399"/>
    </location>
</feature>
<feature type="compositionally biased region" description="Basic and acidic residues" evidence="5">
    <location>
        <begin position="437"/>
        <end position="448"/>
    </location>
</feature>
<feature type="compositionally biased region" description="Pro residues" evidence="5">
    <location>
        <begin position="552"/>
        <end position="563"/>
    </location>
</feature>
<feature type="compositionally biased region" description="Low complexity" evidence="5">
    <location>
        <begin position="590"/>
        <end position="607"/>
    </location>
</feature>
<feature type="compositionally biased region" description="Basic and acidic residues" evidence="5">
    <location>
        <begin position="628"/>
        <end position="640"/>
    </location>
</feature>
<feature type="compositionally biased region" description="Low complexity" evidence="5">
    <location>
        <begin position="701"/>
        <end position="710"/>
    </location>
</feature>
<feature type="compositionally biased region" description="Pro residues" evidence="5">
    <location>
        <begin position="1069"/>
        <end position="1078"/>
    </location>
</feature>
<feature type="compositionally biased region" description="Polar residues" evidence="5">
    <location>
        <begin position="1217"/>
        <end position="1250"/>
    </location>
</feature>
<feature type="modified residue" description="Phosphoserine" evidence="16">
    <location>
        <position position="47"/>
    </location>
</feature>
<feature type="modified residue" description="Phosphoserine" evidence="16">
    <location>
        <position position="52"/>
    </location>
</feature>
<feature type="modified residue" description="Phosphoserine" evidence="16">
    <location>
        <position position="79"/>
    </location>
</feature>
<feature type="modified residue" description="Phosphothreonine" evidence="2">
    <location>
        <position position="86"/>
    </location>
</feature>
<feature type="modified residue" description="Phosphoserine" evidence="16">
    <location>
        <position position="87"/>
    </location>
</feature>
<feature type="modified residue" description="Phosphoserine" evidence="16">
    <location>
        <position position="98"/>
    </location>
</feature>
<feature type="modified residue" description="Phosphoserine" evidence="16">
    <location>
        <position position="211"/>
    </location>
</feature>
<feature type="modified residue" description="Phosphoserine" evidence="3">
    <location>
        <position position="233"/>
    </location>
</feature>
<feature type="modified residue" description="Phosphoserine" evidence="3">
    <location>
        <position position="237"/>
    </location>
</feature>
<feature type="modified residue" description="Phosphoserine" evidence="16">
    <location>
        <position position="247"/>
    </location>
</feature>
<feature type="modified residue" description="Phosphoserine" evidence="16">
    <location>
        <position position="293"/>
    </location>
</feature>
<feature type="modified residue" description="Phosphotyrosine" evidence="15 16">
    <location>
        <position position="309"/>
    </location>
</feature>
<feature type="modified residue" description="Phosphoserine" evidence="16">
    <location>
        <position position="366"/>
    </location>
</feature>
<feature type="modified residue" description="Phosphoserine" evidence="16">
    <location>
        <position position="375"/>
    </location>
</feature>
<feature type="modified residue" description="Phosphoserine" evidence="16">
    <location>
        <position position="392"/>
    </location>
</feature>
<feature type="modified residue" description="Omega-N-methylarginine" evidence="17">
    <location>
        <position position="397"/>
    </location>
</feature>
<feature type="modified residue" description="Omega-N-methylarginine" evidence="17">
    <location>
        <position position="404"/>
    </location>
</feature>
<feature type="modified residue" description="Phosphoserine" evidence="14">
    <location>
        <position position="411"/>
    </location>
</feature>
<feature type="modified residue" description="Phosphoserine" evidence="16">
    <location>
        <position position="430"/>
    </location>
</feature>
<feature type="modified residue" description="Phosphoserine" evidence="16">
    <location>
        <position position="432"/>
    </location>
</feature>
<feature type="modified residue" description="Phosphotyrosine" evidence="15">
    <location>
        <position position="464"/>
    </location>
</feature>
<feature type="modified residue" description="Phosphoserine" evidence="16">
    <location>
        <position position="559"/>
    </location>
</feature>
<feature type="modified residue" description="Phosphoserine" evidence="16">
    <location>
        <position position="562"/>
    </location>
</feature>
<feature type="modified residue" description="Phosphoserine" evidence="16">
    <location>
        <position position="566"/>
    </location>
</feature>
<feature type="modified residue" description="Omega-N-methylarginine" evidence="17">
    <location>
        <position position="567"/>
    </location>
</feature>
<feature type="modified residue" description="Phosphoserine" evidence="16">
    <location>
        <position position="569"/>
    </location>
</feature>
<feature type="modified residue" description="Phosphoserine" evidence="16">
    <location>
        <position position="579"/>
    </location>
</feature>
<feature type="modified residue" description="Phosphoserine" evidence="16">
    <location>
        <position position="581"/>
    </location>
</feature>
<feature type="modified residue" description="Phosphoserine" evidence="16">
    <location>
        <position position="583"/>
    </location>
</feature>
<feature type="modified residue" description="Phosphoserine" evidence="14 16">
    <location>
        <position position="588"/>
    </location>
</feature>
<feature type="modified residue" description="Phosphoserine" evidence="16">
    <location>
        <position position="664"/>
    </location>
</feature>
<feature type="modified residue" description="Phosphoserine" evidence="16">
    <location>
        <position position="688"/>
    </location>
</feature>
<feature type="modified residue" description="Phosphothreonine" evidence="16">
    <location>
        <position position="691"/>
    </location>
</feature>
<feature type="modified residue" description="Phosphothreonine" evidence="16">
    <location>
        <position position="704"/>
    </location>
</feature>
<feature type="modified residue" description="Phosphoserine" evidence="16">
    <location>
        <position position="911"/>
    </location>
</feature>
<feature type="modified residue" description="Phosphoserine" evidence="16">
    <location>
        <position position="933"/>
    </location>
</feature>
<feature type="modified residue" description="Phosphothreonine" evidence="2">
    <location>
        <position position="951"/>
    </location>
</feature>
<feature type="modified residue" description="Phosphoserine" evidence="14 16">
    <location>
        <position position="1054"/>
    </location>
</feature>
<feature type="modified residue" description="Phosphoserine" evidence="14 16">
    <location>
        <position position="1110"/>
    </location>
</feature>
<feature type="modified residue" description="Phosphoserine" evidence="16">
    <location>
        <position position="1127"/>
    </location>
</feature>
<feature type="splice variant" id="VSP_050631" description="In isoform 2." evidence="9 10">
    <original>MQPWQCLRRFALAWWERTAEGRARSPREEVGPRDPGGRGEP</original>
    <variation>MGNAPSQ</variation>
    <location>
        <begin position="1"/>
        <end position="41"/>
    </location>
</feature>
<feature type="splice variant" id="VSP_050632" description="In isoform 3." evidence="8">
    <location>
        <begin position="1207"/>
        <end position="1250"/>
    </location>
</feature>
<feature type="sequence conflict" description="In Ref. 2; BAC98232." evidence="11" ref="2">
    <original>NV</original>
    <variation>KL</variation>
    <location>
        <begin position="740"/>
        <end position="741"/>
    </location>
</feature>
<feature type="sequence conflict" description="In Ref. 2; BAC98232." evidence="11" ref="2">
    <original>P</original>
    <variation>R</variation>
    <location>
        <position position="755"/>
    </location>
</feature>
<feature type="sequence conflict" description="In Ref. 2; BAC98232." evidence="11" ref="2">
    <original>DV</original>
    <variation>EL</variation>
    <location>
        <begin position="759"/>
        <end position="760"/>
    </location>
</feature>
<feature type="sequence conflict" description="In Ref. 2; BAC98232." evidence="11" ref="2">
    <original>M</original>
    <variation>V</variation>
    <location>
        <position position="821"/>
    </location>
</feature>
<feature type="sequence conflict" description="In Ref. 2; BAC98232." evidence="11" ref="2">
    <original>C</original>
    <variation>G</variation>
    <location>
        <position position="960"/>
    </location>
</feature>
<feature type="sequence conflict" description="In Ref. 1; AAD00087." evidence="11" ref="1">
    <original>KL</original>
    <variation>NV</variation>
    <location>
        <begin position="1121"/>
        <end position="1122"/>
    </location>
</feature>
<name>SRCN1_MOUSE</name>
<reference evidence="11" key="1">
    <citation type="submission" date="1997-12" db="EMBL/GenBank/DDBJ databases">
        <authorList>
            <person name="Croci L."/>
            <person name="Bossolasco M."/>
            <person name="Consalez G.G."/>
        </authorList>
    </citation>
    <scope>NUCLEOTIDE SEQUENCE [MRNA] (ISOFORMS 1 AND 2)</scope>
</reference>
<reference evidence="11" key="2">
    <citation type="journal article" date="2003" name="DNA Res.">
        <title>Prediction of the coding sequences of mouse homologues of KIAA gene: III. The complete nucleotide sequences of 500 mouse KIAA-homologous cDNAs identified by screening of terminal sequences of cDNA clones randomly sampled from size-fractionated libraries.</title>
        <authorList>
            <person name="Okazaki N."/>
            <person name="Kikuno R."/>
            <person name="Ohara R."/>
            <person name="Inamoto S."/>
            <person name="Koseki H."/>
            <person name="Hiraoka S."/>
            <person name="Saga Y."/>
            <person name="Nagase T."/>
            <person name="Ohara O."/>
            <person name="Koga H."/>
        </authorList>
    </citation>
    <scope>NUCLEOTIDE SEQUENCE [LARGE SCALE MRNA] OF 271-1250 (ISOFORM 3)</scope>
    <source>
        <tissue evidence="13">Brain</tissue>
    </source>
</reference>
<reference evidence="11" key="3">
    <citation type="journal article" date="2004" name="Mol. Biol. Cell">
        <title>p130Cas-associated protein (p140Cap) as a new tyrosine-phosphorylated protein involved in cell spreading.</title>
        <authorList>
            <person name="Di Stefano P."/>
            <person name="Cabodi S."/>
            <person name="Erba E.B."/>
            <person name="Margaria V."/>
            <person name="Bergatto E."/>
            <person name="Giuffrida M.G."/>
            <person name="Silengo L."/>
            <person name="Tarone G."/>
            <person name="Turco E."/>
            <person name="Defilippi P."/>
        </authorList>
    </citation>
    <scope>ALTERNATIVE SPLICING</scope>
    <scope>TISSUE SPECIFICITY</scope>
</reference>
<reference key="4">
    <citation type="journal article" date="2004" name="Mol. Cell. Proteomics">
        <title>Phosphoproteomic analysis of the developing mouse brain.</title>
        <authorList>
            <person name="Ballif B.A."/>
            <person name="Villen J."/>
            <person name="Beausoleil S.A."/>
            <person name="Schwartz D."/>
            <person name="Gygi S.P."/>
        </authorList>
    </citation>
    <scope>IDENTIFICATION BY MASS SPECTROMETRY [LARGE SCALE ANALYSIS]</scope>
    <source>
        <tissue>Embryonic brain</tissue>
    </source>
</reference>
<reference key="5">
    <citation type="journal article" date="2006" name="Mol. Cell. Proteomics">
        <title>Comprehensive identification of phosphorylation sites in postsynaptic density preparations.</title>
        <authorList>
            <person name="Trinidad J.C."/>
            <person name="Specht C.G."/>
            <person name="Thalhammer A."/>
            <person name="Schoepfer R."/>
            <person name="Burlingame A.L."/>
        </authorList>
    </citation>
    <scope>PHOSPHORYLATION [LARGE SCALE ANALYSIS] AT SER-411; SER-588; SER-1054 AND SER-1110</scope>
    <scope>IDENTIFICATION BY MASS SPECTROMETRY [LARGE SCALE ANALYSIS]</scope>
    <source>
        <tissue>Brain</tissue>
    </source>
</reference>
<reference key="6">
    <citation type="journal article" date="2007" name="Mol. Cell. Proteomics">
        <title>Qualitative and quantitative analyses of protein phosphorylation in naive and stimulated mouse synaptosomal preparations.</title>
        <authorList>
            <person name="Munton R.P."/>
            <person name="Tweedie-Cullen R."/>
            <person name="Livingstone-Zatchej M."/>
            <person name="Weinandy F."/>
            <person name="Waidelich M."/>
            <person name="Longo D."/>
            <person name="Gehrig P."/>
            <person name="Potthast F."/>
            <person name="Rutishauser D."/>
            <person name="Gerrits B."/>
            <person name="Panse C."/>
            <person name="Schlapbach R."/>
            <person name="Mansuy I.M."/>
        </authorList>
    </citation>
    <scope>IDENTIFICATION BY MASS SPECTROMETRY [LARGE SCALE ANALYSIS]</scope>
    <source>
        <tissue>Brain cortex</tissue>
    </source>
</reference>
<reference key="7">
    <citation type="journal article" date="2008" name="J. Proteome Res.">
        <title>Large-scale identification and evolution indexing of tyrosine phosphorylation sites from murine brain.</title>
        <authorList>
            <person name="Ballif B.A."/>
            <person name="Carey G.R."/>
            <person name="Sunyaev S.R."/>
            <person name="Gygi S.P."/>
        </authorList>
    </citation>
    <scope>PHOSPHORYLATION [LARGE SCALE ANALYSIS] AT TYR-309 AND TYR-464</scope>
    <scope>IDENTIFICATION BY MASS SPECTROMETRY [LARGE SCALE ANALYSIS]</scope>
    <source>
        <tissue>Brain</tissue>
    </source>
</reference>
<reference key="8">
    <citation type="journal article" date="2009" name="Neuron">
        <title>Dynamic microtubules regulate dendritic spine morphology and synaptic plasticity.</title>
        <authorList>
            <person name="Jaworski J."/>
            <person name="Kapitein L.C."/>
            <person name="Gouveia S.M."/>
            <person name="Dortland B.R."/>
            <person name="Wulf P.S."/>
            <person name="Grigoriev I."/>
            <person name="Camera P."/>
            <person name="Spangler S.A."/>
            <person name="Di Stefano P."/>
            <person name="Demmers J."/>
            <person name="Krugers H."/>
            <person name="Defilippi P."/>
            <person name="Akhmanova A."/>
            <person name="Hoogenraad C.C."/>
        </authorList>
    </citation>
    <scope>TISSUE SPECIFICITY</scope>
</reference>
<reference key="9">
    <citation type="journal article" date="2010" name="Cell">
        <title>A tissue-specific atlas of mouse protein phosphorylation and expression.</title>
        <authorList>
            <person name="Huttlin E.L."/>
            <person name="Jedrychowski M.P."/>
            <person name="Elias J.E."/>
            <person name="Goswami T."/>
            <person name="Rad R."/>
            <person name="Beausoleil S.A."/>
            <person name="Villen J."/>
            <person name="Haas W."/>
            <person name="Sowa M.E."/>
            <person name="Gygi S.P."/>
        </authorList>
    </citation>
    <scope>PHOSPHORYLATION [LARGE SCALE ANALYSIS] AT SER-47; SER-52; SER-79; SER-87; SER-98; SER-211; SER-247; SER-293; TYR-309; SER-366; SER-375; SER-392; SER-430; SER-432; SER-559; SER-562; SER-566; SER-569; SER-579; SER-581; SER-583; SER-588; SER-664; SER-688; THR-691; THR-704; SER-911; SER-933; SER-1054; SER-1110 AND SER-1127</scope>
    <scope>IDENTIFICATION BY MASS SPECTROMETRY [LARGE SCALE ANALYSIS]</scope>
    <source>
        <tissue>Brain</tissue>
        <tissue>Brown adipose tissue</tissue>
        <tissue>Kidney</tissue>
    </source>
</reference>
<reference key="10">
    <citation type="journal article" date="2014" name="Mol. Cell. Proteomics">
        <title>Immunoaffinity enrichment and mass spectrometry analysis of protein methylation.</title>
        <authorList>
            <person name="Guo A."/>
            <person name="Gu H."/>
            <person name="Zhou J."/>
            <person name="Mulhern D."/>
            <person name="Wang Y."/>
            <person name="Lee K.A."/>
            <person name="Yang V."/>
            <person name="Aguiar M."/>
            <person name="Kornhauser J."/>
            <person name="Jia X."/>
            <person name="Ren J."/>
            <person name="Beausoleil S.A."/>
            <person name="Silva J.C."/>
            <person name="Vemulapalli V."/>
            <person name="Bedford M.T."/>
            <person name="Comb M.J."/>
        </authorList>
    </citation>
    <scope>METHYLATION [LARGE SCALE ANALYSIS] AT ARG-397; ARG-404 AND ARG-567</scope>
    <scope>IDENTIFICATION BY MASS SPECTROMETRY [LARGE SCALE ANALYSIS]</scope>
    <source>
        <tissue>Brain</tissue>
    </source>
</reference>
<gene>
    <name type="primary">Srcin1</name>
    <name type="synonym">Kiaa1684</name>
    <name type="synonym">P140</name>
</gene>
<sequence>MQPWQCLRRFALAWWERTAEGRARSPREEVGPRDPGGRGEPDPERSSPPMLSADDAEYPREYRTLGGGGGGGSGGRRFSNVGLVHTSERRHTVIAAQSLEALSGLQKADADRKRDAFMDHLKSKYPQHALALRGQQDRMREQVGGWTVDPVCLLSSLCSHLHGDSTPSGAGQPAQQPNYWSFKTRSSRHTQGAQPGLADQAAKLSYASAESLETMSEAELPLGFSRMNRFRQSLPLSRSASQTKLRSPGVLFLQFGEETRRVHITHEVSSLDTLHALIAHMFPQKLTMGMLKSPNTAILIKDEARNVFYELEDVRDIQDRSIIKIYRKEPLYAAFPGSHLTNGDLRREMVYASRESSPTRRLNNLSPASHLASSSPPPGLPSGLPSGLPSGSPSRSRLSYAGGRPPSYAGSPVHHAAERLGGAPTGQGVSPSPSAILERRDVKPDEDLAGKAGGMVLVKGEGLYADPYGLLHEGRLSLAAAAETHSHTRARAACTSGVPCALSAPTPLPRCSPTWRTRCTRRALAALYGDGYGFRLPPSSPQKLADVSAPSGGPPPPHSPYSGPPSRGSPVRQSFRKDSGSSSVFAESPGGKARSTGSASTAGAPPSELFPGPGERSLVGFGPPVPAKDTETRERMEAMEKQIASLTGLVQSALLRGSEPETPSEKVEGSNGAATPSAPVCGSGSKSSGATPVSGPPPPSASSTPAGQPTAVSRLQMQLHLRGLQNSASDLRGQLQQLRNVQLQNQESVRALLKPTEADVSMRVSEAARRQEDPLQRQRTLVEEERLRYLNDEELITQQLNDLEKSVEKIQRDVAHNHRLMPGPELEEKALVLKQLGETLTELKAHFPGLQSKMRVVLRVEVEAVKFLKEEPQRLDGLLKRCRGVTDTLAQIRRQVDEGMWPPPNNLLNQSPKKVAAETDFSKGLDFEIPPPSPPLNLHELSGPAEGTPLTPKSTNPTKCLDASSKRNTDKAVSVEAAERDWEEKRAALTQYSAKDINRLLEETQAELLKAIPDLDCASKTHPGPAPTPDHKPPKAPHGQKAAPRTEPSGRRGSDELTVPRYRTEKPSKSPPPPPPRRSFPSSHGLTTTRTGEVVVTSKKDSVFIKKAESEELEVQKPQVKLRRAVSEVVRPASTPPIMASAIKDEDDEERIIAELESGGSSVPPMKVVTPGASRLKAAQGPAGSPDKGKHGKQRTEYMRIQAQQQATKPSKEVSGPNETSSPGSEKPSGSRTSIPVLTSFGARNSSISF</sequence>
<comment type="function">
    <text evidence="1">Acts as a negative regulator of SRC by activating CSK which inhibits SRC activity and downstream signaling, leading to impaired cell spreading and migration. Regulates dendritic spine morphology. Involved in calcium-dependent exocytosis. May play a role in neurotransmitter release or synapse maintenance (By similarity).</text>
</comment>
<comment type="subunit">
    <text evidence="1">Interacts with the N-terminal coiled-coil region of SNAP25. Interacts with BCAR1/p130Cas and SRC through its C-terminal domain. Interacts with CSK, CTTN, SORBS3/vinexin, SYP and MAPRE3/EB3 (By similarity).</text>
</comment>
<comment type="interaction">
    <interactant intactId="EBI-775592">
        <id>Q9QWI6</id>
    </interactant>
    <interactant intactId="EBI-77088">
        <id>Q61140</id>
        <label>Bcar1</label>
    </interactant>
    <organismsDiffer>false</organismsDiffer>
    <experiments>2</experiments>
</comment>
<comment type="interaction">
    <interactant intactId="EBI-775592">
        <id>Q9QWI6</id>
    </interactant>
    <interactant intactId="EBI-702093">
        <id>P56945</id>
        <label>BCAR1</label>
    </interactant>
    <organismsDiffer>true</organismsDiffer>
    <experiments>3</experiments>
</comment>
<comment type="interaction">
    <interactant intactId="EBI-775607">
        <id>Q9QWI6-2</id>
    </interactant>
    <interactant intactId="EBI-351886">
        <id>Q14247</id>
        <label>CTTN</label>
    </interactant>
    <organismsDiffer>true</organismsDiffer>
    <experiments>2</experiments>
</comment>
<comment type="interaction">
    <interactant intactId="EBI-775607">
        <id>Q9QWI6-2</id>
    </interactant>
    <interactant intactId="EBI-726739">
        <id>Q9UPY8</id>
        <label>MAPRE3</label>
    </interactant>
    <organismsDiffer>true</organismsDiffer>
    <experiments>5</experiments>
</comment>
<comment type="interaction">
    <interactant intactId="EBI-775607">
        <id>Q9QWI6-2</id>
    </interactant>
    <interactant intactId="EBI-1222956">
        <id>O60504-2</id>
        <label>SORBS3</label>
    </interactant>
    <organismsDiffer>true</organismsDiffer>
    <experiments>4</experiments>
</comment>
<comment type="interaction">
    <interactant intactId="EBI-775607">
        <id>Q9QWI6-2</id>
    </interactant>
    <interactant intactId="EBI-848039">
        <id>P00523</id>
        <label>SRC</label>
    </interactant>
    <organismsDiffer>true</organismsDiffer>
    <experiments>2</experiments>
</comment>
<comment type="interaction">
    <interactant intactId="EBI-775607">
        <id>Q9QWI6-2</id>
    </interactant>
    <interactant intactId="EBI-976085">
        <id>P07825</id>
        <label>Syp</label>
    </interactant>
    <organismsDiffer>true</organismsDiffer>
    <experiments>2</experiments>
</comment>
<comment type="subcellular location">
    <subcellularLocation>
        <location evidence="3">Cytoplasm</location>
    </subcellularLocation>
    <subcellularLocation>
        <location evidence="3">Cytoplasm</location>
        <location evidence="3">Cytoskeleton</location>
    </subcellularLocation>
    <subcellularLocation>
        <location evidence="3">Cell projection</location>
        <location evidence="3">Axon</location>
    </subcellularLocation>
    <subcellularLocation>
        <location evidence="3">Cell projection</location>
        <location evidence="3">Dendrite</location>
    </subcellularLocation>
    <subcellularLocation>
        <location evidence="3">Presynapse</location>
    </subcellularLocation>
    <subcellularLocation>
        <location evidence="3">Postsynapse</location>
    </subcellularLocation>
    <subcellularLocation>
        <location evidence="3">Postsynaptic density</location>
    </subcellularLocation>
    <text evidence="3">Localized to the perinuclear region, lamellopodia, cortical actin and actin stress fibers but not to focal adhesions. Strongly expressed in axons and dendrites of the CA1 and CA3 hippocampal regions and of the dentate gyrus. Detected in both presynapses and postsynapses and enriched in postsynaptic density fractions.</text>
</comment>
<comment type="alternative products">
    <event type="alternative splicing"/>
    <isoform>
        <id>Q9QWI6-1</id>
        <name evidence="6">1</name>
        <name evidence="9">1a</name>
        <sequence type="displayed"/>
    </isoform>
    <isoform>
        <id>Q9QWI6-2</id>
        <name evidence="6">2</name>
        <name evidence="9">1b</name>
        <sequence type="described" ref="VSP_050631"/>
    </isoform>
    <isoform>
        <id>Q9QWI6-3</id>
        <name evidence="11">3</name>
        <sequence type="described" ref="VSP_050632"/>
    </isoform>
</comment>
<comment type="tissue specificity">
    <text evidence="6 7">Expressed predominantly in central nervous system with high levels detected in cortex, cerebellum, midbrain and spinal cord (at protein level). Also expressed in testis and epithelial-rich tissues such as mammary gland, lung and kidney.</text>
</comment>
<comment type="PTM">
    <text evidence="2">Tyrosine-phosphorylated in response to EGF and to cell adhesion to integrin ligands.</text>
</comment>
<comment type="similarity">
    <text evidence="11">Belongs to the SRCIN1 family.</text>
</comment>
<comment type="sequence caution" evidence="11">
    <conflict type="frameshift">
        <sequence resource="EMBL-CDS" id="BAC98232"/>
    </conflict>
</comment>
<evidence type="ECO:0000250" key="1"/>
<evidence type="ECO:0000250" key="2">
    <source>
        <dbReference type="UniProtKB" id="Q9C0H9"/>
    </source>
</evidence>
<evidence type="ECO:0000250" key="3">
    <source>
        <dbReference type="UniProtKB" id="Q9QXY2"/>
    </source>
</evidence>
<evidence type="ECO:0000255" key="4"/>
<evidence type="ECO:0000256" key="5">
    <source>
        <dbReference type="SAM" id="MobiDB-lite"/>
    </source>
</evidence>
<evidence type="ECO:0000269" key="6">
    <source>
    </source>
</evidence>
<evidence type="ECO:0000269" key="7">
    <source>
    </source>
</evidence>
<evidence type="ECO:0000303" key="8">
    <source>
    </source>
</evidence>
<evidence type="ECO:0000303" key="9">
    <source>
    </source>
</evidence>
<evidence type="ECO:0000303" key="10">
    <source ref="1"/>
</evidence>
<evidence type="ECO:0000305" key="11"/>
<evidence type="ECO:0000312" key="12">
    <source>
        <dbReference type="EMBL" id="AAC15635.1"/>
    </source>
</evidence>
<evidence type="ECO:0000312" key="13">
    <source>
        <dbReference type="EMBL" id="BAC98232.1"/>
    </source>
</evidence>
<evidence type="ECO:0007744" key="14">
    <source>
    </source>
</evidence>
<evidence type="ECO:0007744" key="15">
    <source>
    </source>
</evidence>
<evidence type="ECO:0007744" key="16">
    <source>
    </source>
</evidence>
<evidence type="ECO:0007744" key="17">
    <source>
    </source>
</evidence>
<accession>Q9QWI6</accession>
<accession>O70298</accession>
<proteinExistence type="evidence at protein level"/>
<protein>
    <recommendedName>
        <fullName>SRC kinase signaling inhibitor 1</fullName>
    </recommendedName>
    <alternativeName>
        <fullName>SNAP-25-interacting protein</fullName>
        <shortName>SNIP</shortName>
    </alternativeName>
    <alternativeName>
        <fullName>p130Cas-associated protein</fullName>
    </alternativeName>
    <alternativeName>
        <fullName>p140Cap</fullName>
    </alternativeName>
</protein>
<organism evidence="12">
    <name type="scientific">Mus musculus</name>
    <name type="common">Mouse</name>
    <dbReference type="NCBI Taxonomy" id="10090"/>
    <lineage>
        <taxon>Eukaryota</taxon>
        <taxon>Metazoa</taxon>
        <taxon>Chordata</taxon>
        <taxon>Craniata</taxon>
        <taxon>Vertebrata</taxon>
        <taxon>Euteleostomi</taxon>
        <taxon>Mammalia</taxon>
        <taxon>Eutheria</taxon>
        <taxon>Euarchontoglires</taxon>
        <taxon>Glires</taxon>
        <taxon>Rodentia</taxon>
        <taxon>Myomorpha</taxon>
        <taxon>Muroidea</taxon>
        <taxon>Muridae</taxon>
        <taxon>Murinae</taxon>
        <taxon>Mus</taxon>
        <taxon>Mus</taxon>
    </lineage>
</organism>
<dbReference type="EMBL" id="AF040944">
    <property type="protein sequence ID" value="AAC15635.1"/>
    <property type="molecule type" value="mRNA"/>
</dbReference>
<dbReference type="EMBL" id="U59873">
    <property type="protein sequence ID" value="AAD00087.1"/>
    <property type="molecule type" value="mRNA"/>
</dbReference>
<dbReference type="EMBL" id="AK129422">
    <property type="protein sequence ID" value="BAC98232.1"/>
    <property type="status" value="ALT_FRAME"/>
    <property type="molecule type" value="mRNA"/>
</dbReference>
<dbReference type="PIR" id="T34101">
    <property type="entry name" value="T34101"/>
</dbReference>
<dbReference type="RefSeq" id="NP_061361.2">
    <property type="nucleotide sequence ID" value="NM_018873.2"/>
</dbReference>
<dbReference type="BioGRID" id="207768">
    <property type="interactions" value="17"/>
</dbReference>
<dbReference type="FunCoup" id="Q9QWI6">
    <property type="interactions" value="518"/>
</dbReference>
<dbReference type="IntAct" id="Q9QWI6">
    <property type="interactions" value="371"/>
</dbReference>
<dbReference type="MINT" id="Q9QWI6"/>
<dbReference type="STRING" id="10090.ENSMUSP00000103222"/>
<dbReference type="GlyGen" id="Q9QWI6">
    <property type="glycosylation" value="13 sites, 1 O-linked glycan (11 sites)"/>
</dbReference>
<dbReference type="iPTMnet" id="Q9QWI6"/>
<dbReference type="PhosphoSitePlus" id="Q9QWI6"/>
<dbReference type="SwissPalm" id="Q9QWI6"/>
<dbReference type="PaxDb" id="10090-ENSMUSP00000103222"/>
<dbReference type="PeptideAtlas" id="Q9QWI6"/>
<dbReference type="ProteomicsDB" id="263337">
    <molecule id="Q9QWI6-1"/>
</dbReference>
<dbReference type="ProteomicsDB" id="263338">
    <molecule id="Q9QWI6-2"/>
</dbReference>
<dbReference type="ProteomicsDB" id="263339">
    <molecule id="Q9QWI6-3"/>
</dbReference>
<dbReference type="DNASU" id="56013"/>
<dbReference type="GeneID" id="56013"/>
<dbReference type="KEGG" id="mmu:56013"/>
<dbReference type="AGR" id="MGI:1933179"/>
<dbReference type="CTD" id="80725"/>
<dbReference type="MGI" id="MGI:1933179">
    <property type="gene designation" value="Srcin1"/>
</dbReference>
<dbReference type="eggNOG" id="ENOG502QPNH">
    <property type="taxonomic scope" value="Eukaryota"/>
</dbReference>
<dbReference type="InParanoid" id="Q9QWI6"/>
<dbReference type="PhylomeDB" id="Q9QWI6"/>
<dbReference type="BioGRID-ORCS" id="56013">
    <property type="hits" value="0 hits in 78 CRISPR screens"/>
</dbReference>
<dbReference type="CD-CODE" id="CE726F99">
    <property type="entry name" value="Postsynaptic density"/>
</dbReference>
<dbReference type="ChiTaRS" id="Srcin1">
    <property type="organism name" value="mouse"/>
</dbReference>
<dbReference type="PRO" id="PR:Q9QWI6"/>
<dbReference type="Proteomes" id="UP000000589">
    <property type="component" value="Unplaced"/>
</dbReference>
<dbReference type="RNAct" id="Q9QWI6">
    <property type="molecule type" value="protein"/>
</dbReference>
<dbReference type="GO" id="GO:0015629">
    <property type="term" value="C:actin cytoskeleton"/>
    <property type="evidence" value="ECO:0000266"/>
    <property type="project" value="MGI"/>
</dbReference>
<dbReference type="GO" id="GO:0030424">
    <property type="term" value="C:axon"/>
    <property type="evidence" value="ECO:0000250"/>
    <property type="project" value="UniProtKB"/>
</dbReference>
<dbReference type="GO" id="GO:0005737">
    <property type="term" value="C:cytoplasm"/>
    <property type="evidence" value="ECO:0000250"/>
    <property type="project" value="UniProtKB"/>
</dbReference>
<dbReference type="GO" id="GO:0030425">
    <property type="term" value="C:dendrite"/>
    <property type="evidence" value="ECO:0000250"/>
    <property type="project" value="UniProtKB"/>
</dbReference>
<dbReference type="GO" id="GO:0098978">
    <property type="term" value="C:glutamatergic synapse"/>
    <property type="evidence" value="ECO:0000314"/>
    <property type="project" value="SynGO"/>
</dbReference>
<dbReference type="GO" id="GO:0014069">
    <property type="term" value="C:postsynaptic density"/>
    <property type="evidence" value="ECO:0000314"/>
    <property type="project" value="MGI"/>
</dbReference>
<dbReference type="GO" id="GO:0098793">
    <property type="term" value="C:presynapse"/>
    <property type="evidence" value="ECO:0000314"/>
    <property type="project" value="SynGO"/>
</dbReference>
<dbReference type="GO" id="GO:0045202">
    <property type="term" value="C:synapse"/>
    <property type="evidence" value="ECO:0000250"/>
    <property type="project" value="UniProtKB"/>
</dbReference>
<dbReference type="GO" id="GO:0019901">
    <property type="term" value="F:protein kinase binding"/>
    <property type="evidence" value="ECO:0000250"/>
    <property type="project" value="UniProtKB"/>
</dbReference>
<dbReference type="GO" id="GO:0006887">
    <property type="term" value="P:exocytosis"/>
    <property type="evidence" value="ECO:0007669"/>
    <property type="project" value="UniProtKB-KW"/>
</dbReference>
<dbReference type="GO" id="GO:0007162">
    <property type="term" value="P:negative regulation of cell adhesion"/>
    <property type="evidence" value="ECO:0000314"/>
    <property type="project" value="MGI"/>
</dbReference>
<dbReference type="GO" id="GO:0061099">
    <property type="term" value="P:negative regulation of protein tyrosine kinase activity"/>
    <property type="evidence" value="ECO:0000250"/>
    <property type="project" value="UniProtKB"/>
</dbReference>
<dbReference type="GO" id="GO:0061098">
    <property type="term" value="P:positive regulation of protein tyrosine kinase activity"/>
    <property type="evidence" value="ECO:0000250"/>
    <property type="project" value="UniProtKB"/>
</dbReference>
<dbReference type="GO" id="GO:0030334">
    <property type="term" value="P:regulation of cell migration"/>
    <property type="evidence" value="ECO:0000250"/>
    <property type="project" value="UniProtKB"/>
</dbReference>
<dbReference type="GO" id="GO:0061001">
    <property type="term" value="P:regulation of dendritic spine morphogenesis"/>
    <property type="evidence" value="ECO:0000250"/>
    <property type="project" value="UniProtKB"/>
</dbReference>
<dbReference type="GO" id="GO:0051963">
    <property type="term" value="P:regulation of synapse assembly"/>
    <property type="evidence" value="ECO:0000314"/>
    <property type="project" value="SynGO"/>
</dbReference>
<dbReference type="GO" id="GO:0034446">
    <property type="term" value="P:substrate adhesion-dependent cell spreading"/>
    <property type="evidence" value="ECO:0000250"/>
    <property type="project" value="UniProtKB"/>
</dbReference>
<dbReference type="FunFam" id="1.20.58.1540:FF:000001">
    <property type="entry name" value="SRC kinase signaling inhibitor 1"/>
    <property type="match status" value="1"/>
</dbReference>
<dbReference type="Gene3D" id="1.20.58.1540">
    <property type="entry name" value="Actin interacting protein 3, C-terminal domain"/>
    <property type="match status" value="1"/>
</dbReference>
<dbReference type="InterPro" id="IPR022782">
    <property type="entry name" value="AIP3-like_C"/>
</dbReference>
<dbReference type="InterPro" id="IPR051825">
    <property type="entry name" value="SRCIN1"/>
</dbReference>
<dbReference type="PANTHER" id="PTHR22741">
    <property type="entry name" value="P140CAP/SNIP-RELATED"/>
    <property type="match status" value="1"/>
</dbReference>
<dbReference type="PANTHER" id="PTHR22741:SF5">
    <property type="entry name" value="SRC KINASE SIGNALING INHIBITOR 1"/>
    <property type="match status" value="1"/>
</dbReference>
<dbReference type="Pfam" id="PF03915">
    <property type="entry name" value="AIP3"/>
    <property type="match status" value="1"/>
</dbReference>
<keyword id="KW-0025">Alternative splicing</keyword>
<keyword id="KW-0966">Cell projection</keyword>
<keyword id="KW-0175">Coiled coil</keyword>
<keyword id="KW-0963">Cytoplasm</keyword>
<keyword id="KW-0206">Cytoskeleton</keyword>
<keyword id="KW-0268">Exocytosis</keyword>
<keyword id="KW-0488">Methylation</keyword>
<keyword id="KW-0597">Phosphoprotein</keyword>
<keyword id="KW-1185">Reference proteome</keyword>
<keyword id="KW-0770">Synapse</keyword>